<protein>
    <recommendedName>
        <fullName>Conotoxin Bu15</fullName>
    </recommendedName>
</protein>
<evidence type="ECO:0000250" key="1"/>
<evidence type="ECO:0000250" key="2">
    <source>
        <dbReference type="UniProtKB" id="Q5EHP3"/>
    </source>
</evidence>
<evidence type="ECO:0000255" key="3"/>
<evidence type="ECO:0000305" key="4"/>
<evidence type="ECO:0000305" key="5">
    <source>
    </source>
</evidence>
<name>CM315_CONBU</name>
<dbReference type="GO" id="GO:0005576">
    <property type="term" value="C:extracellular region"/>
    <property type="evidence" value="ECO:0007669"/>
    <property type="project" value="UniProtKB-SubCell"/>
</dbReference>
<dbReference type="GO" id="GO:0008200">
    <property type="term" value="F:ion channel inhibitor activity"/>
    <property type="evidence" value="ECO:0007669"/>
    <property type="project" value="InterPro"/>
</dbReference>
<dbReference type="GO" id="GO:0090729">
    <property type="term" value="F:toxin activity"/>
    <property type="evidence" value="ECO:0007669"/>
    <property type="project" value="UniProtKB-KW"/>
</dbReference>
<dbReference type="InterPro" id="IPR004214">
    <property type="entry name" value="Conotoxin"/>
</dbReference>
<dbReference type="Pfam" id="PF02950">
    <property type="entry name" value="Conotoxin"/>
    <property type="match status" value="1"/>
</dbReference>
<proteinExistence type="inferred from homology"/>
<feature type="signal peptide" evidence="3">
    <location>
        <begin position="1"/>
        <end position="24"/>
    </location>
</feature>
<feature type="propeptide" id="PRO_0000409962" evidence="1">
    <location>
        <begin position="25"/>
        <end position="43"/>
    </location>
</feature>
<feature type="peptide" id="PRO_0000409963" description="Conotoxin Bu15">
    <location>
        <begin position="44"/>
        <end position="76"/>
    </location>
</feature>
<feature type="disulfide bond" evidence="2">
    <location>
        <begin position="51"/>
        <end position="65"/>
    </location>
</feature>
<feature type="disulfide bond" evidence="2">
    <location>
        <begin position="52"/>
        <end position="63"/>
    </location>
</feature>
<feature type="disulfide bond" evidence="2">
    <location>
        <begin position="57"/>
        <end position="66"/>
    </location>
</feature>
<organism>
    <name type="scientific">Conus bullatus</name>
    <name type="common">Bubble cone</name>
    <dbReference type="NCBI Taxonomy" id="89438"/>
    <lineage>
        <taxon>Eukaryota</taxon>
        <taxon>Metazoa</taxon>
        <taxon>Spiralia</taxon>
        <taxon>Lophotrochozoa</taxon>
        <taxon>Mollusca</taxon>
        <taxon>Gastropoda</taxon>
        <taxon>Caenogastropoda</taxon>
        <taxon>Neogastropoda</taxon>
        <taxon>Conoidea</taxon>
        <taxon>Conidae</taxon>
        <taxon>Conus</taxon>
        <taxon>Textilia</taxon>
    </lineage>
</organism>
<sequence>MLKMGVLLFTFLVLFPLATLQLDADQPVERYADNKQDLNPDERMIFLFGGCCRMSSCQPPPVCNCCAKQDLNPDER</sequence>
<accession>P0CY73</accession>
<reference key="1">
    <citation type="journal article" date="2011" name="BMC Genomics">
        <title>Characterization of the Conus bullatus genome and its venom-duct transcriptome.</title>
        <authorList>
            <person name="Hu H."/>
            <person name="Bandyopadhyay P.K."/>
            <person name="Olivera B.M."/>
            <person name="Yandell M."/>
        </authorList>
    </citation>
    <scope>NUCLEOTIDE SEQUENCE [MRNA]</scope>
    <source>
        <tissue>Venom duct</tissue>
    </source>
</reference>
<comment type="subcellular location">
    <subcellularLocation>
        <location evidence="4">Secreted</location>
    </subcellularLocation>
</comment>
<comment type="tissue specificity">
    <text evidence="5">Expressed by the venom duct.</text>
</comment>
<comment type="domain">
    <text evidence="4">The cysteine framework is III (CC-C-C-CC). Classified in the M-1 branch, since 1 residue stands between the fourth and the fifth cysteine residues.</text>
</comment>
<comment type="similarity">
    <text evidence="4">Belongs to the conotoxin M superfamily.</text>
</comment>
<keyword id="KW-1015">Disulfide bond</keyword>
<keyword id="KW-0872">Ion channel impairing toxin</keyword>
<keyword id="KW-0528">Neurotoxin</keyword>
<keyword id="KW-0964">Secreted</keyword>
<keyword id="KW-0732">Signal</keyword>
<keyword id="KW-0800">Toxin</keyword>